<sequence>MNPGDAQSIDRRCVRRSFDASAERYDEVAVLQREVADRLLERLEPVRVHPRRVLDLGAGTGYATRGLLRRYRKAEVHAVDLAPAMLQRVRRRAPWLRRPRCVCADLHALPYPDDSFELVFSNLALQWAEDLPTALRELQRVTAPEGAVMFATFGPETLHELRGAWAEVGDQARVHRFADKHDVGDRMLEAGFVDPVLDGESFTLTYAQPREVMRDLKALGASNADPGRPRGLLSPHRLARVEAAYRLAWRQPDGRVPATYEVVYGHAWGMGGTPQRADDTGEVRLDVHGIRRRRR</sequence>
<gene>
    <name evidence="1" type="primary">bioC</name>
    <name type="ordered locus">Hhal_0960</name>
</gene>
<keyword id="KW-0093">Biotin biosynthesis</keyword>
<keyword id="KW-0489">Methyltransferase</keyword>
<keyword id="KW-1185">Reference proteome</keyword>
<keyword id="KW-0949">S-adenosyl-L-methionine</keyword>
<keyword id="KW-0808">Transferase</keyword>
<proteinExistence type="inferred from homology"/>
<protein>
    <recommendedName>
        <fullName evidence="1">Malonyl-[acyl-carrier protein] O-methyltransferase</fullName>
        <shortName evidence="1">Malonyl-ACP O-methyltransferase</shortName>
        <ecNumber evidence="1">2.1.1.197</ecNumber>
    </recommendedName>
    <alternativeName>
        <fullName evidence="1">Biotin synthesis protein BioC</fullName>
    </alternativeName>
</protein>
<evidence type="ECO:0000255" key="1">
    <source>
        <dbReference type="HAMAP-Rule" id="MF_00835"/>
    </source>
</evidence>
<dbReference type="EC" id="2.1.1.197" evidence="1"/>
<dbReference type="EMBL" id="CP000544">
    <property type="protein sequence ID" value="ABM61736.1"/>
    <property type="molecule type" value="Genomic_DNA"/>
</dbReference>
<dbReference type="RefSeq" id="WP_011813759.1">
    <property type="nucleotide sequence ID" value="NC_008789.1"/>
</dbReference>
<dbReference type="SMR" id="A1WVM4"/>
<dbReference type="STRING" id="349124.Hhal_0960"/>
<dbReference type="KEGG" id="hha:Hhal_0960"/>
<dbReference type="eggNOG" id="COG2226">
    <property type="taxonomic scope" value="Bacteria"/>
</dbReference>
<dbReference type="HOGENOM" id="CLU_046586_2_1_6"/>
<dbReference type="OrthoDB" id="9760689at2"/>
<dbReference type="UniPathway" id="UPA00078"/>
<dbReference type="Proteomes" id="UP000000647">
    <property type="component" value="Chromosome"/>
</dbReference>
<dbReference type="GO" id="GO:0010340">
    <property type="term" value="F:carboxyl-O-methyltransferase activity"/>
    <property type="evidence" value="ECO:0007669"/>
    <property type="project" value="UniProtKB-UniRule"/>
</dbReference>
<dbReference type="GO" id="GO:0102130">
    <property type="term" value="F:malonyl-CoA methyltransferase activity"/>
    <property type="evidence" value="ECO:0007669"/>
    <property type="project" value="UniProtKB-EC"/>
</dbReference>
<dbReference type="GO" id="GO:0008757">
    <property type="term" value="F:S-adenosylmethionine-dependent methyltransferase activity"/>
    <property type="evidence" value="ECO:0007669"/>
    <property type="project" value="InterPro"/>
</dbReference>
<dbReference type="GO" id="GO:0009102">
    <property type="term" value="P:biotin biosynthetic process"/>
    <property type="evidence" value="ECO:0007669"/>
    <property type="project" value="UniProtKB-UniRule"/>
</dbReference>
<dbReference type="GO" id="GO:0032259">
    <property type="term" value="P:methylation"/>
    <property type="evidence" value="ECO:0007669"/>
    <property type="project" value="UniProtKB-KW"/>
</dbReference>
<dbReference type="CDD" id="cd02440">
    <property type="entry name" value="AdoMet_MTases"/>
    <property type="match status" value="1"/>
</dbReference>
<dbReference type="Gene3D" id="3.40.50.150">
    <property type="entry name" value="Vaccinia Virus protein VP39"/>
    <property type="match status" value="1"/>
</dbReference>
<dbReference type="HAMAP" id="MF_00835">
    <property type="entry name" value="BioC"/>
    <property type="match status" value="1"/>
</dbReference>
<dbReference type="InterPro" id="IPR011814">
    <property type="entry name" value="BioC"/>
</dbReference>
<dbReference type="InterPro" id="IPR050602">
    <property type="entry name" value="Malonyl-ACP_OMT"/>
</dbReference>
<dbReference type="InterPro" id="IPR013216">
    <property type="entry name" value="Methyltransf_11"/>
</dbReference>
<dbReference type="InterPro" id="IPR029063">
    <property type="entry name" value="SAM-dependent_MTases_sf"/>
</dbReference>
<dbReference type="NCBIfam" id="TIGR02072">
    <property type="entry name" value="BioC"/>
    <property type="match status" value="1"/>
</dbReference>
<dbReference type="PANTHER" id="PTHR13090">
    <property type="entry name" value="ARGININE-HYDROXYLASE NDUFAF5, MITOCHONDRIAL"/>
    <property type="match status" value="1"/>
</dbReference>
<dbReference type="PANTHER" id="PTHR13090:SF1">
    <property type="entry name" value="ARGININE-HYDROXYLASE NDUFAF5, MITOCHONDRIAL"/>
    <property type="match status" value="1"/>
</dbReference>
<dbReference type="Pfam" id="PF08241">
    <property type="entry name" value="Methyltransf_11"/>
    <property type="match status" value="1"/>
</dbReference>
<dbReference type="SUPFAM" id="SSF53335">
    <property type="entry name" value="S-adenosyl-L-methionine-dependent methyltransferases"/>
    <property type="match status" value="1"/>
</dbReference>
<reference key="1">
    <citation type="submission" date="2006-12" db="EMBL/GenBank/DDBJ databases">
        <title>Complete sequence of Halorhodospira halophila SL1.</title>
        <authorList>
            <consortium name="US DOE Joint Genome Institute"/>
            <person name="Copeland A."/>
            <person name="Lucas S."/>
            <person name="Lapidus A."/>
            <person name="Barry K."/>
            <person name="Detter J.C."/>
            <person name="Glavina del Rio T."/>
            <person name="Hammon N."/>
            <person name="Israni S."/>
            <person name="Dalin E."/>
            <person name="Tice H."/>
            <person name="Pitluck S."/>
            <person name="Saunders E."/>
            <person name="Brettin T."/>
            <person name="Bruce D."/>
            <person name="Han C."/>
            <person name="Tapia R."/>
            <person name="Schmutz J."/>
            <person name="Larimer F."/>
            <person name="Land M."/>
            <person name="Hauser L."/>
            <person name="Kyrpides N."/>
            <person name="Mikhailova N."/>
            <person name="Hoff W."/>
            <person name="Richardson P."/>
        </authorList>
    </citation>
    <scope>NUCLEOTIDE SEQUENCE [LARGE SCALE GENOMIC DNA]</scope>
    <source>
        <strain>DSM 244 / SL1</strain>
    </source>
</reference>
<accession>A1WVM4</accession>
<comment type="function">
    <text evidence="1">Converts the free carboxyl group of a malonyl-thioester to its methyl ester by transfer of a methyl group from S-adenosyl-L-methionine (SAM). It allows to synthesize pimeloyl-ACP via the fatty acid synthetic pathway.</text>
</comment>
<comment type="catalytic activity">
    <reaction evidence="1">
        <text>malonyl-[ACP] + S-adenosyl-L-methionine = malonyl-[ACP] methyl ester + S-adenosyl-L-homocysteine</text>
        <dbReference type="Rhea" id="RHEA:17105"/>
        <dbReference type="Rhea" id="RHEA-COMP:9623"/>
        <dbReference type="Rhea" id="RHEA-COMP:9954"/>
        <dbReference type="ChEBI" id="CHEBI:57856"/>
        <dbReference type="ChEBI" id="CHEBI:59789"/>
        <dbReference type="ChEBI" id="CHEBI:78449"/>
        <dbReference type="ChEBI" id="CHEBI:78845"/>
        <dbReference type="EC" id="2.1.1.197"/>
    </reaction>
</comment>
<comment type="pathway">
    <text evidence="1">Cofactor biosynthesis; biotin biosynthesis.</text>
</comment>
<comment type="similarity">
    <text evidence="1">Belongs to the methyltransferase superfamily.</text>
</comment>
<organism>
    <name type="scientific">Halorhodospira halophila (strain DSM 244 / SL1)</name>
    <name type="common">Ectothiorhodospira halophila (strain DSM 244 / SL1)</name>
    <dbReference type="NCBI Taxonomy" id="349124"/>
    <lineage>
        <taxon>Bacteria</taxon>
        <taxon>Pseudomonadati</taxon>
        <taxon>Pseudomonadota</taxon>
        <taxon>Gammaproteobacteria</taxon>
        <taxon>Chromatiales</taxon>
        <taxon>Ectothiorhodospiraceae</taxon>
        <taxon>Halorhodospira</taxon>
    </lineage>
</organism>
<name>BIOC_HALHL</name>
<feature type="chain" id="PRO_0000412502" description="Malonyl-[acyl-carrier protein] O-methyltransferase">
    <location>
        <begin position="1"/>
        <end position="295"/>
    </location>
</feature>